<name>MDTH_SALTI</name>
<accession>Q8Z7L0</accession>
<accession>Q7C9B3</accession>
<proteinExistence type="inferred from homology"/>
<sequence>MSRVSQARNLGKYFLLIDNMLVVLGFFVVFPLISIRFVDQMGWAAVMVGIALGLRQFIQQGLGIFGGAIADRFGAKPMIVTGMLMRAAGFATMGIAHEPWLLWFSCFLSGLGGTLFDPPRSALVVKLIRPEQRGRFFSLLMMQDSAGAVIGALLGSWLLQYDFRLVCATGAILFILCALFNAWLLPAWKLSTARTPVREGMRRVMSNKRFVTYVLTLAGYYMLAVQVMLMLPIMVNDIAGSPAAVKWMYAIEACLSLTLLYPIARWSEKRFRLEHRLMAGLLVMSLSMLPIGMVGNLQQLFTLICAFYIGSVIAEPARETLSASPADARARGSYMGFSRLGLAIGGAISYIGGGWLFDMGKALAQPELPWMMLGIIGFITFLALGWQFSHKRTPRRMLEPGA</sequence>
<dbReference type="EMBL" id="AL513382">
    <property type="protein sequence ID" value="CAD08290.1"/>
    <property type="molecule type" value="Genomic_DNA"/>
</dbReference>
<dbReference type="EMBL" id="AE014613">
    <property type="protein sequence ID" value="AAO69378.1"/>
    <property type="molecule type" value="Genomic_DNA"/>
</dbReference>
<dbReference type="RefSeq" id="NP_455659.1">
    <property type="nucleotide sequence ID" value="NC_003198.1"/>
</dbReference>
<dbReference type="RefSeq" id="WP_000092170.1">
    <property type="nucleotide sequence ID" value="NZ_WSUR01000018.1"/>
</dbReference>
<dbReference type="SMR" id="Q8Z7L0"/>
<dbReference type="STRING" id="220341.gene:17585170"/>
<dbReference type="KEGG" id="stt:t1754"/>
<dbReference type="KEGG" id="sty:STY1204"/>
<dbReference type="PATRIC" id="fig|220341.7.peg.1206"/>
<dbReference type="eggNOG" id="COG0477">
    <property type="taxonomic scope" value="Bacteria"/>
</dbReference>
<dbReference type="HOGENOM" id="CLU_001265_60_2_6"/>
<dbReference type="OMA" id="FSLNYWA"/>
<dbReference type="OrthoDB" id="56516at2"/>
<dbReference type="Proteomes" id="UP000000541">
    <property type="component" value="Chromosome"/>
</dbReference>
<dbReference type="Proteomes" id="UP000002670">
    <property type="component" value="Chromosome"/>
</dbReference>
<dbReference type="GO" id="GO:0005886">
    <property type="term" value="C:plasma membrane"/>
    <property type="evidence" value="ECO:0007669"/>
    <property type="project" value="UniProtKB-SubCell"/>
</dbReference>
<dbReference type="GO" id="GO:0022857">
    <property type="term" value="F:transmembrane transporter activity"/>
    <property type="evidence" value="ECO:0007669"/>
    <property type="project" value="UniProtKB-UniRule"/>
</dbReference>
<dbReference type="CDD" id="cd17329">
    <property type="entry name" value="MFS_MdtH_MDR_like"/>
    <property type="match status" value="1"/>
</dbReference>
<dbReference type="FunFam" id="1.20.1250.20:FF:000039">
    <property type="entry name" value="Multidrug resistance protein MdtH"/>
    <property type="match status" value="1"/>
</dbReference>
<dbReference type="Gene3D" id="1.20.1250.20">
    <property type="entry name" value="MFS general substrate transporter like domains"/>
    <property type="match status" value="1"/>
</dbReference>
<dbReference type="HAMAP" id="MF_01529">
    <property type="entry name" value="MFS_MdtH"/>
    <property type="match status" value="1"/>
</dbReference>
<dbReference type="InterPro" id="IPR011701">
    <property type="entry name" value="MFS"/>
</dbReference>
<dbReference type="InterPro" id="IPR020846">
    <property type="entry name" value="MFS_dom"/>
</dbReference>
<dbReference type="InterPro" id="IPR036259">
    <property type="entry name" value="MFS_trans_sf"/>
</dbReference>
<dbReference type="InterPro" id="IPR050171">
    <property type="entry name" value="MFS_Transporters"/>
</dbReference>
<dbReference type="InterPro" id="IPR022855">
    <property type="entry name" value="Multidrug-R_MdtH"/>
</dbReference>
<dbReference type="NCBIfam" id="NF008650">
    <property type="entry name" value="PRK11646.1"/>
    <property type="match status" value="1"/>
</dbReference>
<dbReference type="PANTHER" id="PTHR23517:SF2">
    <property type="entry name" value="MULTIDRUG RESISTANCE PROTEIN MDTH"/>
    <property type="match status" value="1"/>
</dbReference>
<dbReference type="PANTHER" id="PTHR23517">
    <property type="entry name" value="RESISTANCE PROTEIN MDTM, PUTATIVE-RELATED-RELATED"/>
    <property type="match status" value="1"/>
</dbReference>
<dbReference type="Pfam" id="PF07690">
    <property type="entry name" value="MFS_1"/>
    <property type="match status" value="1"/>
</dbReference>
<dbReference type="SUPFAM" id="SSF103473">
    <property type="entry name" value="MFS general substrate transporter"/>
    <property type="match status" value="1"/>
</dbReference>
<dbReference type="PROSITE" id="PS50850">
    <property type="entry name" value="MFS"/>
    <property type="match status" value="1"/>
</dbReference>
<protein>
    <recommendedName>
        <fullName evidence="1">Multidrug resistance protein MdtH</fullName>
    </recommendedName>
</protein>
<feature type="chain" id="PRO_0000173349" description="Multidrug resistance protein MdtH">
    <location>
        <begin position="1"/>
        <end position="402"/>
    </location>
</feature>
<feature type="topological domain" description="Cytoplasmic" evidence="1">
    <location>
        <begin position="1"/>
        <end position="12"/>
    </location>
</feature>
<feature type="transmembrane region" description="Helical" evidence="1">
    <location>
        <begin position="13"/>
        <end position="33"/>
    </location>
</feature>
<feature type="topological domain" description="Periplasmic" evidence="1">
    <location>
        <begin position="34"/>
        <end position="98"/>
    </location>
</feature>
<feature type="transmembrane region" description="Helical" evidence="1">
    <location>
        <begin position="99"/>
        <end position="116"/>
    </location>
</feature>
<feature type="topological domain" description="Cytoplasmic" evidence="1">
    <location>
        <begin position="117"/>
        <end position="138"/>
    </location>
</feature>
<feature type="transmembrane region" description="Helical" evidence="1">
    <location>
        <begin position="139"/>
        <end position="159"/>
    </location>
</feature>
<feature type="topological domain" description="Periplasmic" evidence="1">
    <location>
        <begin position="160"/>
        <end position="164"/>
    </location>
</feature>
<feature type="transmembrane region" description="Helical" evidence="1">
    <location>
        <begin position="165"/>
        <end position="185"/>
    </location>
</feature>
<feature type="topological domain" description="Cytoplasmic" evidence="1">
    <location>
        <begin position="186"/>
        <end position="213"/>
    </location>
</feature>
<feature type="transmembrane region" description="Helical" evidence="1">
    <location>
        <begin position="214"/>
        <end position="234"/>
    </location>
</feature>
<feature type="topological domain" description="Periplasmic" evidence="1">
    <location>
        <begin position="235"/>
        <end position="243"/>
    </location>
</feature>
<feature type="transmembrane region" description="Helical" evidence="1">
    <location>
        <begin position="244"/>
        <end position="264"/>
    </location>
</feature>
<feature type="topological domain" description="Cytoplasmic" evidence="1">
    <location>
        <begin position="265"/>
        <end position="276"/>
    </location>
</feature>
<feature type="transmembrane region" description="Helical" evidence="1">
    <location>
        <begin position="277"/>
        <end position="297"/>
    </location>
</feature>
<feature type="topological domain" description="Periplasmic" evidence="1">
    <location>
        <begin position="298"/>
        <end position="299"/>
    </location>
</feature>
<feature type="transmembrane region" description="Helical" evidence="1">
    <location>
        <begin position="300"/>
        <end position="320"/>
    </location>
</feature>
<feature type="topological domain" description="Cytoplasmic" evidence="1">
    <location>
        <begin position="321"/>
        <end position="339"/>
    </location>
</feature>
<feature type="transmembrane region" description="Helical" evidence="1">
    <location>
        <begin position="340"/>
        <end position="360"/>
    </location>
</feature>
<feature type="topological domain" description="Periplasmic" evidence="1">
    <location>
        <begin position="361"/>
        <end position="367"/>
    </location>
</feature>
<feature type="transmembrane region" description="Helical" evidence="1">
    <location>
        <begin position="368"/>
        <end position="388"/>
    </location>
</feature>
<feature type="topological domain" description="Cytoplasmic" evidence="1">
    <location>
        <begin position="389"/>
        <end position="402"/>
    </location>
</feature>
<evidence type="ECO:0000255" key="1">
    <source>
        <dbReference type="HAMAP-Rule" id="MF_01529"/>
    </source>
</evidence>
<reference key="1">
    <citation type="journal article" date="2001" name="Nature">
        <title>Complete genome sequence of a multiple drug resistant Salmonella enterica serovar Typhi CT18.</title>
        <authorList>
            <person name="Parkhill J."/>
            <person name="Dougan G."/>
            <person name="James K.D."/>
            <person name="Thomson N.R."/>
            <person name="Pickard D."/>
            <person name="Wain J."/>
            <person name="Churcher C.M."/>
            <person name="Mungall K.L."/>
            <person name="Bentley S.D."/>
            <person name="Holden M.T.G."/>
            <person name="Sebaihia M."/>
            <person name="Baker S."/>
            <person name="Basham D."/>
            <person name="Brooks K."/>
            <person name="Chillingworth T."/>
            <person name="Connerton P."/>
            <person name="Cronin A."/>
            <person name="Davis P."/>
            <person name="Davies R.M."/>
            <person name="Dowd L."/>
            <person name="White N."/>
            <person name="Farrar J."/>
            <person name="Feltwell T."/>
            <person name="Hamlin N."/>
            <person name="Haque A."/>
            <person name="Hien T.T."/>
            <person name="Holroyd S."/>
            <person name="Jagels K."/>
            <person name="Krogh A."/>
            <person name="Larsen T.S."/>
            <person name="Leather S."/>
            <person name="Moule S."/>
            <person name="O'Gaora P."/>
            <person name="Parry C."/>
            <person name="Quail M.A."/>
            <person name="Rutherford K.M."/>
            <person name="Simmonds M."/>
            <person name="Skelton J."/>
            <person name="Stevens K."/>
            <person name="Whitehead S."/>
            <person name="Barrell B.G."/>
        </authorList>
    </citation>
    <scope>NUCLEOTIDE SEQUENCE [LARGE SCALE GENOMIC DNA]</scope>
    <source>
        <strain>CT18</strain>
    </source>
</reference>
<reference key="2">
    <citation type="journal article" date="2003" name="J. Bacteriol.">
        <title>Comparative genomics of Salmonella enterica serovar Typhi strains Ty2 and CT18.</title>
        <authorList>
            <person name="Deng W."/>
            <person name="Liou S.-R."/>
            <person name="Plunkett G. III"/>
            <person name="Mayhew G.F."/>
            <person name="Rose D.J."/>
            <person name="Burland V."/>
            <person name="Kodoyianni V."/>
            <person name="Schwartz D.C."/>
            <person name="Blattner F.R."/>
        </authorList>
    </citation>
    <scope>NUCLEOTIDE SEQUENCE [LARGE SCALE GENOMIC DNA]</scope>
    <source>
        <strain>ATCC 700931 / Ty2</strain>
    </source>
</reference>
<comment type="subcellular location">
    <subcellularLocation>
        <location evidence="1">Cell inner membrane</location>
        <topology evidence="1">Multi-pass membrane protein</topology>
    </subcellularLocation>
</comment>
<comment type="similarity">
    <text evidence="1">Belongs to the major facilitator superfamily. DHA1 family. MdtH (TC 2.A.1.2.21) subfamily.</text>
</comment>
<gene>
    <name evidence="1" type="primary">mdtH</name>
    <name type="ordered locus">STY1204</name>
    <name type="ordered locus">t1754</name>
</gene>
<organism>
    <name type="scientific">Salmonella typhi</name>
    <dbReference type="NCBI Taxonomy" id="90370"/>
    <lineage>
        <taxon>Bacteria</taxon>
        <taxon>Pseudomonadati</taxon>
        <taxon>Pseudomonadota</taxon>
        <taxon>Gammaproteobacteria</taxon>
        <taxon>Enterobacterales</taxon>
        <taxon>Enterobacteriaceae</taxon>
        <taxon>Salmonella</taxon>
    </lineage>
</organism>
<keyword id="KW-0997">Cell inner membrane</keyword>
<keyword id="KW-1003">Cell membrane</keyword>
<keyword id="KW-0472">Membrane</keyword>
<keyword id="KW-0812">Transmembrane</keyword>
<keyword id="KW-1133">Transmembrane helix</keyword>
<keyword id="KW-0813">Transport</keyword>